<sequence length="1545" mass="175284">MLCIRPEALVLLGALLTVPLDPVGGQDALSLTWEVQRYDGWFNNLRQHEHGAAGSPLRRLVPANYADGVYQALGEPLLPNPRQLSHTTMRGPAGLRSIRNRTVLGVFFGYHVLSDLVSIEKPGCPAEFLNIHIPPGDPVFDPHKSGDVVLPFQRSRWDPNTGQSPSNPRDLTNEVTGWLDGSAIYGSSHSWSDELRSFSGGQLASGPDPAFPRQAQDPLFMWTPPDPATGQRGPQGLYAFGAEQGNREPFLQALGLLWFRYHNLCAQKLAREHPLWGDEELFQHARKRVIATYQSITMYEWLPSFLQQTPPNYTEYRPFLDPSISPEFLAASEQFFSTMVPPGVYMRNASCHFQMVLNESYGSFPALRVCNSYWIRENPNLNSAEAVNQLLLGMASQISELEDWIVVEDLRDYWPGPGKFSRTDYVASSIQRGRDMGLPSYTQALQALGLNTPKNWSDFNPNVDPQVLEATAALYNQDLSRLELFSGGLLESYGDPGPLFSTIVLDQFVRLRDGDRYWFENTKNGLFSKEEIAEIRSTTLRDVLVAVTNVSSSALQPNVFIWNEDSPCPQPQQLTTEDLPHCVPLTVIQYFEGSGPGFGITIVALCCLPLMSLLISGVVAYFRSRERKKLQKRGKESVKKEADKDGVSAMEWPGPKERSYPVSIQLLPDRHLQVLDRHLSVLRTIQLRPRHRVNLILSNNLGRRTLLLKIPKEYDLVLLFNSEDERGAFVQHLQGFCASCALGLDIDEMGESELFRKAVTKQQRGRILEIFFRHLFAQVLDIDQADAGALPLDSSQKVREALTCELSRAEFAESLGLKPQDMFVESMFSLADKDGNGYLSFREFLDVLVVFMKGSPEDKSRLMFTMYDLDGNGFLSKDEFFTMIRSFIEISNNCLSKAQLTEVVESMFREAGFQDKQELTWEDFHFMLRDHDSELRHTQLCVKGGGGGVGVIFKPDISSRVSFIIRTPEERSSPQGVRLPASEASELGGPVLKKRFGKKAVVPPPRLYTEALQEKKQRGFLAQKLQQYKRFVENYRRHIVCVAIFSAICAGLFVERAYYYAFVSPPSGIAETTFVGIILSRGTAASVSFMFSYILLTMCRNLITFLRETFLNHYVPFDAAVDFHRWIAMAALVLAILHSVGHVVNVYIFSVSPLSLLACVFPSVFVNDGSKLPQKFYWWFFQTIPGMTGVLLLVVLAIMYVFASPYFRRRSFRGFWLTHHFYILLYVLLIIHGSFALIQLPRFHIFFLVPALIYVGDKLVSLSRKKVEISVVKAELLPSGVTHLQFQRPQGFEYKSGQWVRIACLGLGTNEYHPFTLTSAPHEDTLSLHIRAVGPWTTRLREIYSHPMGDGYARYPKLYLDGPFGEGHQEWHKFEVSVLVGGGIGVTPFASILKDLVFKSSLGSQMLCKKIYFIWVTRTQRQFEWLADIIREVEENDHRDLVSVHIYITQLAEKFDLRTTMLYICERHFQKVLNRSLFTGLRSITHFGRPPFEPFFNSLQEVHPQVRKIGVFSCGPPGMTKNVEKTCQLINRQDQTHFVHHYENF</sequence>
<keyword id="KW-0106">Calcium</keyword>
<keyword id="KW-0965">Cell junction</keyword>
<keyword id="KW-1003">Cell membrane</keyword>
<keyword id="KW-1015">Disulfide bond</keyword>
<keyword id="KW-0274">FAD</keyword>
<keyword id="KW-0285">Flavoprotein</keyword>
<keyword id="KW-0325">Glycoprotein</keyword>
<keyword id="KW-0376">Hydrogen peroxide</keyword>
<keyword id="KW-0472">Membrane</keyword>
<keyword id="KW-0479">Metal-binding</keyword>
<keyword id="KW-0521">NADP</keyword>
<keyword id="KW-0560">Oxidoreductase</keyword>
<keyword id="KW-0575">Peroxidase</keyword>
<keyword id="KW-1185">Reference proteome</keyword>
<keyword id="KW-0677">Repeat</keyword>
<keyword id="KW-0732">Signal</keyword>
<keyword id="KW-0893">Thyroid hormones biosynthesis</keyword>
<keyword id="KW-0812">Transmembrane</keyword>
<keyword id="KW-1133">Transmembrane helix</keyword>
<organism>
    <name type="scientific">Sus scrofa</name>
    <name type="common">Pig</name>
    <dbReference type="NCBI Taxonomy" id="9823"/>
    <lineage>
        <taxon>Eukaryota</taxon>
        <taxon>Metazoa</taxon>
        <taxon>Chordata</taxon>
        <taxon>Craniata</taxon>
        <taxon>Vertebrata</taxon>
        <taxon>Euteleostomi</taxon>
        <taxon>Mammalia</taxon>
        <taxon>Eutheria</taxon>
        <taxon>Laurasiatheria</taxon>
        <taxon>Artiodactyla</taxon>
        <taxon>Suina</taxon>
        <taxon>Suidae</taxon>
        <taxon>Sus</taxon>
    </lineage>
</organism>
<dbReference type="EC" id="1.11.1.-"/>
<dbReference type="EC" id="1.6.3.1"/>
<dbReference type="EMBL" id="AF547267">
    <property type="protein sequence ID" value="AAN39339.2"/>
    <property type="molecule type" value="mRNA"/>
</dbReference>
<dbReference type="EMBL" id="AF181973">
    <property type="protein sequence ID" value="AAF20056.1"/>
    <property type="molecule type" value="mRNA"/>
</dbReference>
<dbReference type="RefSeq" id="NP_999164.2">
    <property type="nucleotide sequence ID" value="NM_213999.2"/>
</dbReference>
<dbReference type="SMR" id="Q8HZK2"/>
<dbReference type="FunCoup" id="Q8HZK2">
    <property type="interactions" value="105"/>
</dbReference>
<dbReference type="STRING" id="9823.ENSSSCP00000005038"/>
<dbReference type="PeroxiBase" id="3340">
    <property type="entry name" value="SscDuOx02"/>
</dbReference>
<dbReference type="GlyCosmos" id="Q8HZK2">
    <property type="glycosylation" value="6 sites, No reported glycans"/>
</dbReference>
<dbReference type="GlyGen" id="Q8HZK2">
    <property type="glycosylation" value="6 sites"/>
</dbReference>
<dbReference type="PaxDb" id="9823-ENSSSCP00000005038"/>
<dbReference type="GeneID" id="397060"/>
<dbReference type="KEGG" id="ssc:397060"/>
<dbReference type="CTD" id="50506"/>
<dbReference type="eggNOG" id="KOG0039">
    <property type="taxonomic scope" value="Eukaryota"/>
</dbReference>
<dbReference type="InParanoid" id="Q8HZK2"/>
<dbReference type="OrthoDB" id="6019201at2759"/>
<dbReference type="BRENDA" id="1.6.3.1">
    <property type="organism ID" value="6170"/>
</dbReference>
<dbReference type="UniPathway" id="UPA00194"/>
<dbReference type="Proteomes" id="UP000008227">
    <property type="component" value="Unplaced"/>
</dbReference>
<dbReference type="Proteomes" id="UP000314985">
    <property type="component" value="Unplaced"/>
</dbReference>
<dbReference type="Proteomes" id="UP000694570">
    <property type="component" value="Unplaced"/>
</dbReference>
<dbReference type="Proteomes" id="UP000694571">
    <property type="component" value="Unplaced"/>
</dbReference>
<dbReference type="Proteomes" id="UP000694720">
    <property type="component" value="Unplaced"/>
</dbReference>
<dbReference type="Proteomes" id="UP000694722">
    <property type="component" value="Unplaced"/>
</dbReference>
<dbReference type="Proteomes" id="UP000694723">
    <property type="component" value="Unplaced"/>
</dbReference>
<dbReference type="Proteomes" id="UP000694724">
    <property type="component" value="Unplaced"/>
</dbReference>
<dbReference type="Proteomes" id="UP000694725">
    <property type="component" value="Unplaced"/>
</dbReference>
<dbReference type="Proteomes" id="UP000694726">
    <property type="component" value="Unplaced"/>
</dbReference>
<dbReference type="Proteomes" id="UP000694727">
    <property type="component" value="Unplaced"/>
</dbReference>
<dbReference type="Proteomes" id="UP000694728">
    <property type="component" value="Unplaced"/>
</dbReference>
<dbReference type="GO" id="GO:0070161">
    <property type="term" value="C:anchoring junction"/>
    <property type="evidence" value="ECO:0007669"/>
    <property type="project" value="UniProtKB-SubCell"/>
</dbReference>
<dbReference type="GO" id="GO:0045177">
    <property type="term" value="C:apical part of cell"/>
    <property type="evidence" value="ECO:0000250"/>
    <property type="project" value="UniProtKB"/>
</dbReference>
<dbReference type="GO" id="GO:0016324">
    <property type="term" value="C:apical plasma membrane"/>
    <property type="evidence" value="ECO:0007669"/>
    <property type="project" value="UniProtKB-SubCell"/>
</dbReference>
<dbReference type="GO" id="GO:0005829">
    <property type="term" value="C:cytosol"/>
    <property type="evidence" value="ECO:0000250"/>
    <property type="project" value="UniProtKB"/>
</dbReference>
<dbReference type="GO" id="GO:0005783">
    <property type="term" value="C:endoplasmic reticulum"/>
    <property type="evidence" value="ECO:0000250"/>
    <property type="project" value="UniProtKB"/>
</dbReference>
<dbReference type="GO" id="GO:0043020">
    <property type="term" value="C:NADPH oxidase complex"/>
    <property type="evidence" value="ECO:0000318"/>
    <property type="project" value="GO_Central"/>
</dbReference>
<dbReference type="GO" id="GO:0005886">
    <property type="term" value="C:plasma membrane"/>
    <property type="evidence" value="ECO:0000250"/>
    <property type="project" value="UniProtKB"/>
</dbReference>
<dbReference type="GO" id="GO:0005509">
    <property type="term" value="F:calcium ion binding"/>
    <property type="evidence" value="ECO:0007669"/>
    <property type="project" value="InterPro"/>
</dbReference>
<dbReference type="GO" id="GO:0020037">
    <property type="term" value="F:heme binding"/>
    <property type="evidence" value="ECO:0007669"/>
    <property type="project" value="InterPro"/>
</dbReference>
<dbReference type="GO" id="GO:0106293">
    <property type="term" value="F:NADH oxidase H202-forming activity"/>
    <property type="evidence" value="ECO:0007669"/>
    <property type="project" value="RHEA"/>
</dbReference>
<dbReference type="GO" id="GO:0106294">
    <property type="term" value="F:NADPH oxidase H202-forming activity"/>
    <property type="evidence" value="ECO:0007669"/>
    <property type="project" value="RHEA"/>
</dbReference>
<dbReference type="GO" id="GO:0004601">
    <property type="term" value="F:peroxidase activity"/>
    <property type="evidence" value="ECO:0007669"/>
    <property type="project" value="UniProtKB-KW"/>
</dbReference>
<dbReference type="GO" id="GO:0016175">
    <property type="term" value="F:superoxide-generating NAD(P)H oxidase activity"/>
    <property type="evidence" value="ECO:0000318"/>
    <property type="project" value="GO_Central"/>
</dbReference>
<dbReference type="GO" id="GO:0042335">
    <property type="term" value="P:cuticle development"/>
    <property type="evidence" value="ECO:0000250"/>
    <property type="project" value="UniProtKB"/>
</dbReference>
<dbReference type="GO" id="GO:0019221">
    <property type="term" value="P:cytokine-mediated signaling pathway"/>
    <property type="evidence" value="ECO:0000250"/>
    <property type="project" value="UniProtKB"/>
</dbReference>
<dbReference type="GO" id="GO:0006952">
    <property type="term" value="P:defense response"/>
    <property type="evidence" value="ECO:0000318"/>
    <property type="project" value="GO_Central"/>
</dbReference>
<dbReference type="GO" id="GO:0042446">
    <property type="term" value="P:hormone biosynthetic process"/>
    <property type="evidence" value="ECO:0007669"/>
    <property type="project" value="UniProtKB-KW"/>
</dbReference>
<dbReference type="GO" id="GO:0042744">
    <property type="term" value="P:hydrogen peroxide catabolic process"/>
    <property type="evidence" value="ECO:0007669"/>
    <property type="project" value="UniProtKB-KW"/>
</dbReference>
<dbReference type="GO" id="GO:0051591">
    <property type="term" value="P:response to cAMP"/>
    <property type="evidence" value="ECO:0000250"/>
    <property type="project" value="UniProtKB"/>
</dbReference>
<dbReference type="GO" id="GO:0006979">
    <property type="term" value="P:response to oxidative stress"/>
    <property type="evidence" value="ECO:0007669"/>
    <property type="project" value="InterPro"/>
</dbReference>
<dbReference type="GO" id="GO:0042554">
    <property type="term" value="P:superoxide anion generation"/>
    <property type="evidence" value="ECO:0000318"/>
    <property type="project" value="GO_Central"/>
</dbReference>
<dbReference type="GO" id="GO:0006590">
    <property type="term" value="P:thyroid hormone generation"/>
    <property type="evidence" value="ECO:0007669"/>
    <property type="project" value="UniProtKB-UniPathway"/>
</dbReference>
<dbReference type="CDD" id="cd09820">
    <property type="entry name" value="dual_peroxidase_like"/>
    <property type="match status" value="1"/>
</dbReference>
<dbReference type="CDD" id="cd00051">
    <property type="entry name" value="EFh"/>
    <property type="match status" value="2"/>
</dbReference>
<dbReference type="CDD" id="cd06186">
    <property type="entry name" value="NOX_Duox_like_FAD_NADP"/>
    <property type="match status" value="1"/>
</dbReference>
<dbReference type="FunFam" id="2.40.30.10:FF:000043">
    <property type="entry name" value="dual oxidase 1"/>
    <property type="match status" value="1"/>
</dbReference>
<dbReference type="FunFam" id="1.10.640.10:FF:000004">
    <property type="entry name" value="Dual oxidase 2"/>
    <property type="match status" value="1"/>
</dbReference>
<dbReference type="FunFam" id="3.40.50.80:FF:000006">
    <property type="entry name" value="Dual oxidase 2"/>
    <property type="match status" value="1"/>
</dbReference>
<dbReference type="FunFam" id="1.10.238.10:FF:000095">
    <property type="entry name" value="dual oxidase 2"/>
    <property type="match status" value="1"/>
</dbReference>
<dbReference type="Gene3D" id="1.10.238.10">
    <property type="entry name" value="EF-hand"/>
    <property type="match status" value="1"/>
</dbReference>
<dbReference type="Gene3D" id="1.10.640.10">
    <property type="entry name" value="Haem peroxidase domain superfamily, animal type"/>
    <property type="match status" value="1"/>
</dbReference>
<dbReference type="Gene3D" id="3.40.50.80">
    <property type="entry name" value="Nucleotide-binding domain of ferredoxin-NADP reductase (FNR) module"/>
    <property type="match status" value="1"/>
</dbReference>
<dbReference type="Gene3D" id="2.40.30.10">
    <property type="entry name" value="Translation factors"/>
    <property type="match status" value="1"/>
</dbReference>
<dbReference type="InterPro" id="IPR034821">
    <property type="entry name" value="DUOX_peroxidase"/>
</dbReference>
<dbReference type="InterPro" id="IPR011992">
    <property type="entry name" value="EF-hand-dom_pair"/>
</dbReference>
<dbReference type="InterPro" id="IPR018247">
    <property type="entry name" value="EF_Hand_1_Ca_BS"/>
</dbReference>
<dbReference type="InterPro" id="IPR002048">
    <property type="entry name" value="EF_hand_dom"/>
</dbReference>
<dbReference type="InterPro" id="IPR013112">
    <property type="entry name" value="FAD-bd_8"/>
</dbReference>
<dbReference type="InterPro" id="IPR017927">
    <property type="entry name" value="FAD-bd_FR_type"/>
</dbReference>
<dbReference type="InterPro" id="IPR013130">
    <property type="entry name" value="Fe3_Rdtase_TM_dom"/>
</dbReference>
<dbReference type="InterPro" id="IPR013121">
    <property type="entry name" value="Fe_red_NAD-bd_6"/>
</dbReference>
<dbReference type="InterPro" id="IPR039261">
    <property type="entry name" value="FNR_nucleotide-bd"/>
</dbReference>
<dbReference type="InterPro" id="IPR019791">
    <property type="entry name" value="Haem_peroxidase_animal"/>
</dbReference>
<dbReference type="InterPro" id="IPR010255">
    <property type="entry name" value="Haem_peroxidase_sf"/>
</dbReference>
<dbReference type="InterPro" id="IPR037120">
    <property type="entry name" value="Haem_peroxidase_sf_animal"/>
</dbReference>
<dbReference type="InterPro" id="IPR050369">
    <property type="entry name" value="RBOH/FRE"/>
</dbReference>
<dbReference type="InterPro" id="IPR017938">
    <property type="entry name" value="Riboflavin_synthase-like_b-brl"/>
</dbReference>
<dbReference type="PANTHER" id="PTHR11972:SF67">
    <property type="entry name" value="DUAL OXIDASE 2"/>
    <property type="match status" value="1"/>
</dbReference>
<dbReference type="PANTHER" id="PTHR11972">
    <property type="entry name" value="NADPH OXIDASE"/>
    <property type="match status" value="1"/>
</dbReference>
<dbReference type="Pfam" id="PF03098">
    <property type="entry name" value="An_peroxidase"/>
    <property type="match status" value="1"/>
</dbReference>
<dbReference type="Pfam" id="PF00036">
    <property type="entry name" value="EF-hand_1"/>
    <property type="match status" value="1"/>
</dbReference>
<dbReference type="Pfam" id="PF13833">
    <property type="entry name" value="EF-hand_8"/>
    <property type="match status" value="1"/>
</dbReference>
<dbReference type="Pfam" id="PF08022">
    <property type="entry name" value="FAD_binding_8"/>
    <property type="match status" value="1"/>
</dbReference>
<dbReference type="Pfam" id="PF01794">
    <property type="entry name" value="Ferric_reduct"/>
    <property type="match status" value="1"/>
</dbReference>
<dbReference type="Pfam" id="PF08030">
    <property type="entry name" value="NAD_binding_6"/>
    <property type="match status" value="1"/>
</dbReference>
<dbReference type="PRINTS" id="PR00457">
    <property type="entry name" value="ANPEROXIDASE"/>
</dbReference>
<dbReference type="SFLD" id="SFLDS00052">
    <property type="entry name" value="Ferric_Reductase_Domain"/>
    <property type="match status" value="1"/>
</dbReference>
<dbReference type="SFLD" id="SFLDG01168">
    <property type="entry name" value="Ferric_reductase_subgroup_(FRE"/>
    <property type="match status" value="1"/>
</dbReference>
<dbReference type="SFLD" id="SFLDG01169">
    <property type="entry name" value="NADPH_oxidase_subgroup_(NOX)"/>
    <property type="match status" value="1"/>
</dbReference>
<dbReference type="SMART" id="SM00054">
    <property type="entry name" value="EFh"/>
    <property type="match status" value="2"/>
</dbReference>
<dbReference type="SUPFAM" id="SSF47473">
    <property type="entry name" value="EF-hand"/>
    <property type="match status" value="1"/>
</dbReference>
<dbReference type="SUPFAM" id="SSF52343">
    <property type="entry name" value="Ferredoxin reductase-like, C-terminal NADP-linked domain"/>
    <property type="match status" value="1"/>
</dbReference>
<dbReference type="SUPFAM" id="SSF48113">
    <property type="entry name" value="Heme-dependent peroxidases"/>
    <property type="match status" value="1"/>
</dbReference>
<dbReference type="SUPFAM" id="SSF63380">
    <property type="entry name" value="Riboflavin synthase domain-like"/>
    <property type="match status" value="1"/>
</dbReference>
<dbReference type="PROSITE" id="PS00018">
    <property type="entry name" value="EF_HAND_1"/>
    <property type="match status" value="2"/>
</dbReference>
<dbReference type="PROSITE" id="PS50222">
    <property type="entry name" value="EF_HAND_2"/>
    <property type="match status" value="3"/>
</dbReference>
<dbReference type="PROSITE" id="PS51384">
    <property type="entry name" value="FAD_FR"/>
    <property type="match status" value="1"/>
</dbReference>
<dbReference type="PROSITE" id="PS50292">
    <property type="entry name" value="PEROXIDASE_3"/>
    <property type="match status" value="1"/>
</dbReference>
<accession>Q8HZK2</accession>
<accession>Q9TT98</accession>
<protein>
    <recommendedName>
        <fullName>Dual oxidase 2</fullName>
        <ecNumber>1.11.1.-</ecNumber>
        <ecNumber>1.6.3.1</ecNumber>
    </recommendedName>
    <alternativeName>
        <fullName>NADH/NADPH thyroid oxidase p138-tox</fullName>
    </alternativeName>
</protein>
<gene>
    <name type="primary">DUOX2</name>
</gene>
<comment type="function">
    <text>Generates hydrogen peroxide which is required for the activity of thyroid peroxidase/TPO and lactoperoxidase/LPO. Plays a role in thyroid hormones synthesis and lactoperoxidase-mediated antimicrobial defense at the surface of mucosa. May have its own peroxidase activity through its N-terminal peroxidase-like domain.</text>
</comment>
<comment type="catalytic activity">
    <reaction evidence="11">
        <text>NADH + O2 + H(+) = H2O2 + NAD(+)</text>
        <dbReference type="Rhea" id="RHEA:11264"/>
        <dbReference type="ChEBI" id="CHEBI:15378"/>
        <dbReference type="ChEBI" id="CHEBI:15379"/>
        <dbReference type="ChEBI" id="CHEBI:16240"/>
        <dbReference type="ChEBI" id="CHEBI:57540"/>
        <dbReference type="ChEBI" id="CHEBI:57945"/>
        <dbReference type="EC" id="1.6.3.1"/>
    </reaction>
</comment>
<comment type="catalytic activity">
    <reaction evidence="11">
        <text>NADPH + O2 + H(+) = H2O2 + NADP(+)</text>
        <dbReference type="Rhea" id="RHEA:11260"/>
        <dbReference type="ChEBI" id="CHEBI:15378"/>
        <dbReference type="ChEBI" id="CHEBI:15379"/>
        <dbReference type="ChEBI" id="CHEBI:16240"/>
        <dbReference type="ChEBI" id="CHEBI:57783"/>
        <dbReference type="ChEBI" id="CHEBI:58349"/>
        <dbReference type="EC" id="1.6.3.1"/>
    </reaction>
</comment>
<comment type="activity regulation">
    <text evidence="1">The NADPH oxidase activity is calcium-dependent. Peroxidase activity is inhibited by aminobenzohydrazide (By similarity).</text>
</comment>
<comment type="pathway">
    <text>Hormone biosynthesis; thyroid hormone biosynthesis.</text>
</comment>
<comment type="subunit">
    <text evidence="1">Heterodimer with DUOXA2; disulfide-linked. Interacts with TXNDC11, TPO and CYBA.</text>
</comment>
<comment type="subcellular location">
    <subcellularLocation>
        <location evidence="10">Apical cell membrane</location>
        <topology evidence="10">Multi-pass membrane protein</topology>
    </subcellularLocation>
    <subcellularLocation>
        <location evidence="2">Cell junction</location>
    </subcellularLocation>
    <text evidence="2">Localizes to the apical membrane of epithelial cells. Localizes on internal membrane structures under resting conditions, translocates to the plasma membrane and cell-cell junctions upon challenge with enteric pathogens.</text>
</comment>
<comment type="tissue specificity">
    <text evidence="7 10">Expressed in thyroid, and the digestive tract especially in stomach, cecum and sigmoidal colon (at protein level). Expressed in thyroid.</text>
</comment>
<comment type="induction">
    <text evidence="7 8 9">By forskolin and down-regulated by iodide (at protein level). By insulin.</text>
</comment>
<comment type="PTM">
    <text evidence="9">N-glycosylated.</text>
</comment>
<comment type="similarity">
    <text evidence="12">In the N-terminal section; belongs to the peroxidase family.</text>
</comment>
<reference key="1">
    <citation type="journal article" date="2003" name="Endocrinology">
        <title>Effect of iodide on nicotinamide adenine dinucleotide phosphate oxidase activity and Duox2 protein expression in isolated porcine thyroid follicles.</title>
        <authorList>
            <person name="Morand S."/>
            <person name="Chaaraoui M."/>
            <person name="Kaniewski J."/>
            <person name="Deme D."/>
            <person name="Ohayon R."/>
            <person name="Noel-Hudson M.-S."/>
            <person name="Virion A."/>
            <person name="Dupuy C."/>
        </authorList>
    </citation>
    <scope>NUCLEOTIDE SEQUENCE [MRNA]</scope>
    <scope>GLYCOSYLATION</scope>
    <scope>INDUCTION</scope>
    <source>
        <tissue>Thyroid</tissue>
    </source>
</reference>
<reference key="2">
    <citation type="journal article" date="1999" name="J. Biol. Chem.">
        <title>Purification of a novel flavoprotein involved in the thyroid NADPH oxidase. Cloning of the porcine and human cDNAs.</title>
        <authorList>
            <person name="Dupuy C."/>
            <person name="Ohayon R."/>
            <person name="Valent A."/>
            <person name="Noel-Hudson M.-S."/>
            <person name="Deme D."/>
            <person name="Virion A."/>
        </authorList>
    </citation>
    <scope>NUCLEOTIDE SEQUENCE [MRNA] OF 339-1545</scope>
    <scope>INDUCTION</scope>
    <scope>TISSUE SPECIFICITY</scope>
    <source>
        <tissue>Thyroid</tissue>
    </source>
</reference>
<reference key="3">
    <citation type="journal article" date="2003" name="Endocrinology">
        <title>Identification of a truncated dual oxidase 2 (DUOX2) messenger ribonucleic acid (mRNA) in two rat thyroid cell lines. Insulin and forskolin regulation of DUOX2 mRNA levels in FRTL-5 cells and porcine thyrocytes.</title>
        <authorList>
            <person name="Morand S."/>
            <person name="Dos Santos O.F."/>
            <person name="Ohayon R."/>
            <person name="Kaniewski J."/>
            <person name="Noel-Hudson M.-S."/>
            <person name="Virion A."/>
            <person name="Dupuy C."/>
        </authorList>
    </citation>
    <scope>INDUCTION</scope>
</reference>
<reference key="4">
    <citation type="journal article" date="2005" name="Am. J. Physiol.">
        <title>Dual oxidase2 is expressed all along the digestive tract.</title>
        <authorList>
            <person name="Ameziane-El-Hassani R."/>
            <person name="Benfares N."/>
            <person name="Caillou B."/>
            <person name="Talbot M."/>
            <person name="Sabourin J.-C."/>
            <person name="Belotte V."/>
            <person name="Morand S."/>
            <person name="Gnidehou S."/>
            <person name="Agnandji D."/>
            <person name="Ohayon R."/>
            <person name="Kaniewski J."/>
            <person name="Noel-Hudson M.-S."/>
            <person name="Bidart J.-M."/>
            <person name="Schlumberger M."/>
            <person name="Virion A."/>
            <person name="Dupuy C."/>
        </authorList>
    </citation>
    <scope>SUBCELLULAR LOCATION</scope>
    <scope>TISSUE SPECIFICITY</scope>
</reference>
<reference key="5">
    <citation type="journal article" date="2005" name="J. Biol. Chem.">
        <title>Dual oxidase-2 has an intrinsic Ca2+-dependent H2O2-generating activity.</title>
        <authorList>
            <person name="Ameziane-El-Hassani R."/>
            <person name="Morand S."/>
            <person name="Boucher J.L."/>
            <person name="Frapart Y.-M."/>
            <person name="Apostolou D."/>
            <person name="Agnandji D."/>
            <person name="Gnidehou S."/>
            <person name="Ohayon R."/>
            <person name="Noel-Hudson M.-S."/>
            <person name="Francon J."/>
            <person name="Lalaoui K."/>
            <person name="Virion A."/>
            <person name="Dupuy C."/>
        </authorList>
    </citation>
    <scope>CATALYTIC ACTIVITY</scope>
</reference>
<evidence type="ECO:0000250" key="1"/>
<evidence type="ECO:0000250" key="2">
    <source>
        <dbReference type="UniProtKB" id="Q9NRD8"/>
    </source>
</evidence>
<evidence type="ECO:0000255" key="3"/>
<evidence type="ECO:0000255" key="4">
    <source>
        <dbReference type="PROSITE-ProRule" id="PRU00114"/>
    </source>
</evidence>
<evidence type="ECO:0000255" key="5">
    <source>
        <dbReference type="PROSITE-ProRule" id="PRU00448"/>
    </source>
</evidence>
<evidence type="ECO:0000255" key="6">
    <source>
        <dbReference type="PROSITE-ProRule" id="PRU00716"/>
    </source>
</evidence>
<evidence type="ECO:0000269" key="7">
    <source>
    </source>
</evidence>
<evidence type="ECO:0000269" key="8">
    <source>
    </source>
</evidence>
<evidence type="ECO:0000269" key="9">
    <source>
    </source>
</evidence>
<evidence type="ECO:0000269" key="10">
    <source>
    </source>
</evidence>
<evidence type="ECO:0000269" key="11">
    <source>
    </source>
</evidence>
<evidence type="ECO:0000305" key="12"/>
<name>DUOX2_PIG</name>
<proteinExistence type="evidence at protein level"/>
<feature type="signal peptide" evidence="3">
    <location>
        <begin position="1"/>
        <end position="25"/>
    </location>
</feature>
<feature type="chain" id="PRO_0000223350" description="Dual oxidase 2">
    <location>
        <begin position="26"/>
        <end position="1545"/>
    </location>
</feature>
<feature type="topological domain" description="Extracellular" evidence="3">
    <location>
        <begin position="26"/>
        <end position="601"/>
    </location>
</feature>
<feature type="transmembrane region" description="Helical" evidence="3">
    <location>
        <begin position="602"/>
        <end position="622"/>
    </location>
</feature>
<feature type="topological domain" description="Cytoplasmic" evidence="3">
    <location>
        <begin position="623"/>
        <end position="1037"/>
    </location>
</feature>
<feature type="transmembrane region" description="Helical" evidence="3">
    <location>
        <begin position="1038"/>
        <end position="1058"/>
    </location>
</feature>
<feature type="topological domain" description="Extracellular" evidence="3">
    <location>
        <begin position="1059"/>
        <end position="1074"/>
    </location>
</feature>
<feature type="transmembrane region" description="Helical" evidence="3">
    <location>
        <begin position="1075"/>
        <end position="1097"/>
    </location>
</feature>
<feature type="topological domain" description="Cytoplasmic" evidence="3">
    <location>
        <begin position="1098"/>
        <end position="1125"/>
    </location>
</feature>
<feature type="transmembrane region" description="Helical" evidence="3">
    <location>
        <begin position="1126"/>
        <end position="1148"/>
    </location>
</feature>
<feature type="topological domain" description="Extracellular" evidence="3">
    <location>
        <begin position="1149"/>
        <end position="1182"/>
    </location>
</feature>
<feature type="transmembrane region" description="Helical" evidence="3">
    <location>
        <begin position="1183"/>
        <end position="1203"/>
    </location>
</feature>
<feature type="topological domain" description="Cytoplasmic" evidence="3">
    <location>
        <begin position="1204"/>
        <end position="1220"/>
    </location>
</feature>
<feature type="transmembrane region" description="Helical" evidence="3">
    <location>
        <begin position="1221"/>
        <end position="1241"/>
    </location>
</feature>
<feature type="topological domain" description="Extracellular" evidence="3">
    <location>
        <position position="1242"/>
    </location>
</feature>
<feature type="transmembrane region" description="Helical" evidence="3">
    <location>
        <begin position="1243"/>
        <end position="1263"/>
    </location>
</feature>
<feature type="topological domain" description="Cytoplasmic" evidence="3">
    <location>
        <begin position="1264"/>
        <end position="1545"/>
    </location>
</feature>
<feature type="domain" description="EF-hand 1" evidence="5">
    <location>
        <begin position="819"/>
        <end position="854"/>
    </location>
</feature>
<feature type="domain" description="EF-hand 2" evidence="5">
    <location>
        <begin position="855"/>
        <end position="890"/>
    </location>
</feature>
<feature type="domain" description="EF-hand 3" evidence="5">
    <location>
        <begin position="899"/>
        <end position="934"/>
    </location>
</feature>
<feature type="domain" description="Ferric oxidoreductase">
    <location>
        <begin position="1081"/>
        <end position="1263"/>
    </location>
</feature>
<feature type="domain" description="FAD-binding FR-type" evidence="6">
    <location>
        <begin position="1264"/>
        <end position="1370"/>
    </location>
</feature>
<feature type="region of interest" description="Peroxidase-like; mediates peroxidase activity" evidence="1">
    <location>
        <begin position="30"/>
        <end position="596"/>
    </location>
</feature>
<feature type="region of interest" description="Interaction with TXNDC11" evidence="1">
    <location>
        <begin position="960"/>
        <end position="1242"/>
    </location>
</feature>
<feature type="binding site" evidence="5">
    <location>
        <position position="832"/>
    </location>
    <ligand>
        <name>Ca(2+)</name>
        <dbReference type="ChEBI" id="CHEBI:29108"/>
        <label>1</label>
    </ligand>
</feature>
<feature type="binding site" evidence="5">
    <location>
        <position position="834"/>
    </location>
    <ligand>
        <name>Ca(2+)</name>
        <dbReference type="ChEBI" id="CHEBI:29108"/>
        <label>1</label>
    </ligand>
</feature>
<feature type="binding site" evidence="5">
    <location>
        <position position="836"/>
    </location>
    <ligand>
        <name>Ca(2+)</name>
        <dbReference type="ChEBI" id="CHEBI:29108"/>
        <label>1</label>
    </ligand>
</feature>
<feature type="binding site" evidence="5">
    <location>
        <position position="838"/>
    </location>
    <ligand>
        <name>Ca(2+)</name>
        <dbReference type="ChEBI" id="CHEBI:29108"/>
        <label>1</label>
    </ligand>
</feature>
<feature type="binding site" evidence="5">
    <location>
        <position position="843"/>
    </location>
    <ligand>
        <name>Ca(2+)</name>
        <dbReference type="ChEBI" id="CHEBI:29108"/>
        <label>1</label>
    </ligand>
</feature>
<feature type="binding site" evidence="5">
    <location>
        <position position="868"/>
    </location>
    <ligand>
        <name>Ca(2+)</name>
        <dbReference type="ChEBI" id="CHEBI:29108"/>
        <label>2</label>
    </ligand>
</feature>
<feature type="binding site" evidence="5">
    <location>
        <position position="870"/>
    </location>
    <ligand>
        <name>Ca(2+)</name>
        <dbReference type="ChEBI" id="CHEBI:29108"/>
        <label>2</label>
    </ligand>
</feature>
<feature type="binding site" evidence="5">
    <location>
        <position position="872"/>
    </location>
    <ligand>
        <name>Ca(2+)</name>
        <dbReference type="ChEBI" id="CHEBI:29108"/>
        <label>2</label>
    </ligand>
</feature>
<feature type="binding site" evidence="5">
    <location>
        <position position="879"/>
    </location>
    <ligand>
        <name>Ca(2+)</name>
        <dbReference type="ChEBI" id="CHEBI:29108"/>
        <label>2</label>
    </ligand>
</feature>
<feature type="glycosylation site" description="N-linked (GlcNAc...) asparagine" evidence="3">
    <location>
        <position position="100"/>
    </location>
</feature>
<feature type="glycosylation site" description="N-linked (GlcNAc...) asparagine" evidence="3">
    <location>
        <position position="312"/>
    </location>
</feature>
<feature type="glycosylation site" description="N-linked (GlcNAc...) asparagine" evidence="3">
    <location>
        <position position="348"/>
    </location>
</feature>
<feature type="glycosylation site" description="N-linked (GlcNAc...) asparagine" evidence="3">
    <location>
        <position position="358"/>
    </location>
</feature>
<feature type="glycosylation site" description="N-linked (GlcNAc...) asparagine" evidence="3">
    <location>
        <position position="455"/>
    </location>
</feature>
<feature type="glycosylation site" description="N-linked (GlcNAc...) asparagine" evidence="3">
    <location>
        <position position="549"/>
    </location>
</feature>
<feature type="disulfide bond" evidence="4">
    <location>
        <begin position="124"/>
        <end position="1159"/>
    </location>
</feature>
<feature type="disulfide bond" description="Interchain (with C-167 in DUOXA2)" evidence="4">
    <location>
        <position position="568"/>
    </location>
</feature>
<feature type="disulfide bond" description="Interchain (with C-233 in DUOXA2)" evidence="4">
    <location>
        <position position="582"/>
    </location>
</feature>
<feature type="sequence conflict" description="In Ref. 2; AAF20056." evidence="12" ref="2">
    <original>N</original>
    <variation>S</variation>
    <location>
        <position position="1531"/>
    </location>
</feature>